<comment type="function">
    <text>Might catalyze the conversion of monoamine compounds or their metabolites.</text>
</comment>
<comment type="similarity">
    <text evidence="4">Belongs to the short-chain dehydrogenases/reductases (SDR) family.</text>
</comment>
<proteinExistence type="inferred from homology"/>
<organism>
    <name type="scientific">Klebsiella aerogenes</name>
    <name type="common">Enterobacter aerogenes</name>
    <dbReference type="NCBI Taxonomy" id="548"/>
    <lineage>
        <taxon>Bacteria</taxon>
        <taxon>Pseudomonadati</taxon>
        <taxon>Pseudomonadota</taxon>
        <taxon>Gammaproteobacteria</taxon>
        <taxon>Enterobacterales</taxon>
        <taxon>Enterobacteriaceae</taxon>
        <taxon>Klebsiella/Raoultella group</taxon>
        <taxon>Klebsiella</taxon>
    </lineage>
</organism>
<feature type="chain" id="PRO_0000054725" description="Protein MoaE">
    <location>
        <begin position="1"/>
        <end position="257"/>
    </location>
</feature>
<feature type="region of interest" description="Disordered" evidence="3">
    <location>
        <begin position="75"/>
        <end position="96"/>
    </location>
</feature>
<feature type="active site" description="Proton acceptor" evidence="2">
    <location>
        <position position="145"/>
    </location>
</feature>
<feature type="binding site" evidence="1">
    <location>
        <begin position="6"/>
        <end position="29"/>
    </location>
    <ligand>
        <name>NAD(+)</name>
        <dbReference type="ChEBI" id="CHEBI:57540"/>
    </ligand>
</feature>
<feature type="binding site" evidence="1">
    <location>
        <position position="132"/>
    </location>
    <ligand>
        <name>substrate</name>
    </ligand>
</feature>
<dbReference type="EMBL" id="D28533">
    <property type="protein sequence ID" value="BAA05889.1"/>
    <property type="molecule type" value="Genomic_DNA"/>
</dbReference>
<dbReference type="SMR" id="P54795"/>
<dbReference type="GO" id="GO:0016491">
    <property type="term" value="F:oxidoreductase activity"/>
    <property type="evidence" value="ECO:0007669"/>
    <property type="project" value="UniProtKB-KW"/>
</dbReference>
<dbReference type="GO" id="GO:0006629">
    <property type="term" value="P:lipid metabolic process"/>
    <property type="evidence" value="ECO:0007669"/>
    <property type="project" value="UniProtKB-ARBA"/>
</dbReference>
<dbReference type="GO" id="GO:0032787">
    <property type="term" value="P:monocarboxylic acid metabolic process"/>
    <property type="evidence" value="ECO:0007669"/>
    <property type="project" value="UniProtKB-ARBA"/>
</dbReference>
<dbReference type="CDD" id="cd05233">
    <property type="entry name" value="SDR_c"/>
    <property type="match status" value="1"/>
</dbReference>
<dbReference type="Gene3D" id="3.40.50.720">
    <property type="entry name" value="NAD(P)-binding Rossmann-like Domain"/>
    <property type="match status" value="2"/>
</dbReference>
<dbReference type="InterPro" id="IPR036291">
    <property type="entry name" value="NAD(P)-bd_dom_sf"/>
</dbReference>
<dbReference type="InterPro" id="IPR020904">
    <property type="entry name" value="Sc_DH/Rdtase_CS"/>
</dbReference>
<dbReference type="InterPro" id="IPR050259">
    <property type="entry name" value="SDR"/>
</dbReference>
<dbReference type="InterPro" id="IPR002347">
    <property type="entry name" value="SDR_fam"/>
</dbReference>
<dbReference type="PANTHER" id="PTHR42879">
    <property type="entry name" value="3-OXOACYL-(ACYL-CARRIER-PROTEIN) REDUCTASE"/>
    <property type="match status" value="1"/>
</dbReference>
<dbReference type="PANTHER" id="PTHR42879:SF2">
    <property type="entry name" value="3-OXOACYL-[ACYL-CARRIER-PROTEIN] REDUCTASE FABG"/>
    <property type="match status" value="1"/>
</dbReference>
<dbReference type="Pfam" id="PF13561">
    <property type="entry name" value="adh_short_C2"/>
    <property type="match status" value="1"/>
</dbReference>
<dbReference type="PRINTS" id="PR00081">
    <property type="entry name" value="GDHRDH"/>
</dbReference>
<dbReference type="SUPFAM" id="SSF51735">
    <property type="entry name" value="NAD(P)-binding Rossmann-fold domains"/>
    <property type="match status" value="1"/>
</dbReference>
<dbReference type="PROSITE" id="PS00061">
    <property type="entry name" value="ADH_SHORT"/>
    <property type="match status" value="1"/>
</dbReference>
<evidence type="ECO:0000250" key="1"/>
<evidence type="ECO:0000255" key="2">
    <source>
        <dbReference type="PROSITE-ProRule" id="PRU10001"/>
    </source>
</evidence>
<evidence type="ECO:0000256" key="3">
    <source>
        <dbReference type="SAM" id="MobiDB-lite"/>
    </source>
</evidence>
<evidence type="ECO:0000305" key="4"/>
<gene>
    <name type="primary">moaE</name>
</gene>
<sequence length="257" mass="26294">MARVVVITGGGTGIGAACARLMHPAGERVFITGRRDAVRAVANETGATALVAMPPTARCGASGCCRRSSTRPAGLMSSSAAPAGWATAPPPRPATANEREALDGNLTSAFASVRACLPSLIARRGNVLFVASIASLAAGPQACGYVTAKHALIGLMRSVARDYGPQGVRANAICPGWVTTPMADEEMHPLMQAEGLSLTEAYQRVCRDVPLRRPASPEEIAQACQFLCSPQAAIISGATLVADGGASIVDVPTLAFA</sequence>
<name>MOAE_KLEAE</name>
<keyword id="KW-0560">Oxidoreductase</keyword>
<reference key="1">
    <citation type="journal article" date="1995" name="Gene">
        <title>A Klebsiella aerogenes moaEF operon is controlled by the positive MoaR regulator of the monoamine regulon.</title>
        <authorList>
            <person name="Azakami H."/>
            <person name="Sugino H."/>
            <person name="Iwata N."/>
            <person name="Yokoro N."/>
            <person name="Yamashita M."/>
            <person name="Murooka Y."/>
        </authorList>
    </citation>
    <scope>NUCLEOTIDE SEQUENCE [GENOMIC DNA]</scope>
    <source>
        <strain>W70</strain>
    </source>
</reference>
<accession>P54795</accession>
<protein>
    <recommendedName>
        <fullName>Protein MoaE</fullName>
    </recommendedName>
</protein>